<proteinExistence type="evidence at protein level"/>
<accession>P56522</accession>
<organism>
    <name type="scientific">Rattus norvegicus</name>
    <name type="common">Rat</name>
    <dbReference type="NCBI Taxonomy" id="10116"/>
    <lineage>
        <taxon>Eukaryota</taxon>
        <taxon>Metazoa</taxon>
        <taxon>Chordata</taxon>
        <taxon>Craniata</taxon>
        <taxon>Vertebrata</taxon>
        <taxon>Euteleostomi</taxon>
        <taxon>Mammalia</taxon>
        <taxon>Eutheria</taxon>
        <taxon>Euarchontoglires</taxon>
        <taxon>Glires</taxon>
        <taxon>Rodentia</taxon>
        <taxon>Myomorpha</taxon>
        <taxon>Muroidea</taxon>
        <taxon>Muridae</taxon>
        <taxon>Murinae</taxon>
        <taxon>Rattus</taxon>
    </lineage>
</organism>
<feature type="transit peptide" description="Mitochondrion" evidence="3">
    <location>
        <begin position="1"/>
        <end position="34"/>
    </location>
</feature>
<feature type="chain" id="PRO_0000019422" description="NADPH:adrenodoxin oxidoreductase, mitochondrial">
    <location>
        <begin position="35"/>
        <end position="494"/>
    </location>
</feature>
<feature type="binding site" evidence="1">
    <location>
        <position position="51"/>
    </location>
    <ligand>
        <name>FAD</name>
        <dbReference type="ChEBI" id="CHEBI:57692"/>
    </ligand>
</feature>
<feature type="binding site" evidence="1">
    <location>
        <position position="72"/>
    </location>
    <ligand>
        <name>FAD</name>
        <dbReference type="ChEBI" id="CHEBI:57692"/>
    </ligand>
</feature>
<feature type="binding site" evidence="1">
    <location>
        <position position="80"/>
    </location>
    <ligand>
        <name>FAD</name>
        <dbReference type="ChEBI" id="CHEBI:57692"/>
    </ligand>
</feature>
<feature type="binding site" evidence="1">
    <location>
        <position position="116"/>
    </location>
    <ligand>
        <name>FAD</name>
        <dbReference type="ChEBI" id="CHEBI:57692"/>
    </ligand>
</feature>
<feature type="binding site" evidence="1">
    <location>
        <begin position="187"/>
        <end position="190"/>
    </location>
    <ligand>
        <name>NADP(+)</name>
        <dbReference type="ChEBI" id="CHEBI:58349"/>
    </ligand>
</feature>
<feature type="binding site" evidence="1">
    <location>
        <begin position="231"/>
        <end position="232"/>
    </location>
    <ligand>
        <name>NADP(+)</name>
        <dbReference type="ChEBI" id="CHEBI:58349"/>
    </ligand>
</feature>
<feature type="binding site" evidence="1">
    <location>
        <position position="243"/>
    </location>
    <ligand>
        <name>NADP(+)</name>
        <dbReference type="ChEBI" id="CHEBI:58349"/>
    </ligand>
</feature>
<feature type="binding site" evidence="1">
    <location>
        <position position="401"/>
    </location>
    <ligand>
        <name>FAD</name>
        <dbReference type="ChEBI" id="CHEBI:57692"/>
    </ligand>
</feature>
<feature type="binding site" evidence="1">
    <location>
        <begin position="408"/>
        <end position="410"/>
    </location>
    <ligand>
        <name>FAD</name>
        <dbReference type="ChEBI" id="CHEBI:57692"/>
    </ligand>
</feature>
<feature type="binding site" evidence="1">
    <location>
        <position position="408"/>
    </location>
    <ligand>
        <name>NADP(+)</name>
        <dbReference type="ChEBI" id="CHEBI:58349"/>
    </ligand>
</feature>
<feature type="modified residue" description="Phosphoserine" evidence="2">
    <location>
        <position position="313"/>
    </location>
</feature>
<sequence>MAPRCWRWWSWSAWPGVRPLPSRSTPTPGFCKKFSTQETTPQICVVGSGPAGFYTAQHLLKHHTRAHVDIYEKQLVPFGLVRFGVAPDHPEVKNVINTFTQTARSDRCAFRGNVVVGRDVSVPELREAYHAVVLSYGAEDHQPLEIPGEELPGVVSARAFVGWYNGLPENQKLAPDLSCDTAVILGQGNVALDVARILLTPPEHLEKTDITEVALGVLRQSRVKTVWIVGRRGPLQVAFTIKELREMIQLPGTQPILDPSDFLGLQDRIKDVPRPRKRLTELLLRTATEKPGVEEAARRALASRAWGLRFFRSPQQVLPTPDGRRVAGIRLAVTRLEGVGESTRAVPTGDVEDLPCGLLLSSVGYKSRPIDPSVPFDPKLGIIPNTEGRVVNAPGLYCSGWVKRGPTGVITTTMTDSFLTSQVLLKDLKAGLLPSGPRPGYTAIQALLSDRGVRPVSFSDWEKLDAEEVARGQGTGKPREKLVDRREMLQLLGH</sequence>
<comment type="function">
    <text evidence="2 3">Serves as the first electron transfer protein in all the mitochondrial P450 systems including cholesterol side chain cleavage in all steroidogenic tissues, steroid 11-beta hydroxylation in the adrenal cortex, 25-OH-vitamin D3-24 hydroxylation in the kidney, and sterol C-27 hydroxylation in the liver (PubMed:10525147). Also acts as a ferredoxin--NADP(+) reductase essential for coenzyme Q biosynthesis: together with FDX2, transfers the electrons required for the hydroxylation reaction performed by COQ6 (By similarity).</text>
</comment>
<comment type="catalytic activity">
    <reaction evidence="3">
        <text>2 reduced [adrenodoxin] + NADP(+) + H(+) = 2 oxidized [adrenodoxin] + NADPH</text>
        <dbReference type="Rhea" id="RHEA:42312"/>
        <dbReference type="Rhea" id="RHEA-COMP:9998"/>
        <dbReference type="Rhea" id="RHEA-COMP:9999"/>
        <dbReference type="ChEBI" id="CHEBI:15378"/>
        <dbReference type="ChEBI" id="CHEBI:33737"/>
        <dbReference type="ChEBI" id="CHEBI:33738"/>
        <dbReference type="ChEBI" id="CHEBI:57783"/>
        <dbReference type="ChEBI" id="CHEBI:58349"/>
        <dbReference type="EC" id="1.18.1.6"/>
    </reaction>
</comment>
<comment type="catalytic activity">
    <reaction evidence="2">
        <text>2 reduced [2Fe-2S]-[ferredoxin] + NADP(+) + H(+) = 2 oxidized [2Fe-2S]-[ferredoxin] + NADPH</text>
        <dbReference type="Rhea" id="RHEA:20125"/>
        <dbReference type="Rhea" id="RHEA-COMP:10000"/>
        <dbReference type="Rhea" id="RHEA-COMP:10001"/>
        <dbReference type="ChEBI" id="CHEBI:15378"/>
        <dbReference type="ChEBI" id="CHEBI:33737"/>
        <dbReference type="ChEBI" id="CHEBI:33738"/>
        <dbReference type="ChEBI" id="CHEBI:57783"/>
        <dbReference type="ChEBI" id="CHEBI:58349"/>
    </reaction>
</comment>
<comment type="cofactor">
    <cofactor evidence="1">
        <name>FAD</name>
        <dbReference type="ChEBI" id="CHEBI:57692"/>
    </cofactor>
</comment>
<comment type="biophysicochemical properties">
    <kinetics>
        <KM evidence="3">0.32 uM for NADPH</KM>
    </kinetics>
</comment>
<comment type="pathway">
    <text evidence="3">Steroid metabolism; cholesterol metabolism.</text>
</comment>
<comment type="subunit">
    <text evidence="1">Monomer. Interacts directly with FDX1.</text>
</comment>
<comment type="subcellular location">
    <subcellularLocation>
        <location evidence="4">Mitochondrion inner membrane</location>
        <topology evidence="5">Peripheral membrane protein</topology>
    </subcellularLocation>
</comment>
<comment type="similarity">
    <text evidence="5">Belongs to the ferredoxin--NADP reductase type 1 family.</text>
</comment>
<keyword id="KW-0153">Cholesterol metabolism</keyword>
<keyword id="KW-0903">Direct protein sequencing</keyword>
<keyword id="KW-0249">Electron transport</keyword>
<keyword id="KW-0274">FAD</keyword>
<keyword id="KW-0285">Flavoprotein</keyword>
<keyword id="KW-0443">Lipid metabolism</keyword>
<keyword id="KW-0472">Membrane</keyword>
<keyword id="KW-0496">Mitochondrion</keyword>
<keyword id="KW-0999">Mitochondrion inner membrane</keyword>
<keyword id="KW-0521">NADP</keyword>
<keyword id="KW-0560">Oxidoreductase</keyword>
<keyword id="KW-0597">Phosphoprotein</keyword>
<keyword id="KW-1185">Reference proteome</keyword>
<keyword id="KW-0753">Steroid metabolism</keyword>
<keyword id="KW-1207">Sterol metabolism</keyword>
<keyword id="KW-0809">Transit peptide</keyword>
<keyword id="KW-0813">Transport</keyword>
<dbReference type="EC" id="1.18.1.6" evidence="3"/>
<dbReference type="EMBL" id="D63761">
    <property type="protein sequence ID" value="BAA23759.1"/>
    <property type="molecule type" value="mRNA"/>
</dbReference>
<dbReference type="EMBL" id="BC088844">
    <property type="protein sequence ID" value="AAH88844.1"/>
    <property type="molecule type" value="mRNA"/>
</dbReference>
<dbReference type="RefSeq" id="NP_077067.1">
    <property type="nucleotide sequence ID" value="NM_024153.1"/>
</dbReference>
<dbReference type="SMR" id="P56522"/>
<dbReference type="FunCoup" id="P56522">
    <property type="interactions" value="2141"/>
</dbReference>
<dbReference type="IntAct" id="P56522">
    <property type="interactions" value="2"/>
</dbReference>
<dbReference type="STRING" id="10116.ENSRNOP00000075248"/>
<dbReference type="GlyGen" id="P56522">
    <property type="glycosylation" value="2 sites"/>
</dbReference>
<dbReference type="iPTMnet" id="P56522"/>
<dbReference type="PhosphoSitePlus" id="P56522"/>
<dbReference type="jPOST" id="P56522"/>
<dbReference type="PaxDb" id="10116-ENSRNOP00000004592"/>
<dbReference type="Ensembl" id="ENSRNOT00000085636.2">
    <property type="protein sequence ID" value="ENSRNOP00000075248.1"/>
    <property type="gene ID" value="ENSRNOG00000058497.2"/>
</dbReference>
<dbReference type="GeneID" id="79122"/>
<dbReference type="KEGG" id="rno:79122"/>
<dbReference type="AGR" id="RGD:621648"/>
<dbReference type="CTD" id="2232"/>
<dbReference type="RGD" id="621648">
    <property type="gene designation" value="Fdxr"/>
</dbReference>
<dbReference type="eggNOG" id="KOG1800">
    <property type="taxonomic scope" value="Eukaryota"/>
</dbReference>
<dbReference type="GeneTree" id="ENSGT00940000165377"/>
<dbReference type="HOGENOM" id="CLU_024722_3_1_1"/>
<dbReference type="InParanoid" id="P56522"/>
<dbReference type="OMA" id="RFNFIGN"/>
<dbReference type="OrthoDB" id="333024at2759"/>
<dbReference type="PhylomeDB" id="P56522"/>
<dbReference type="BioCyc" id="MetaCyc:MONOMER-14306"/>
<dbReference type="Reactome" id="R-RNO-196108">
    <property type="pathway name" value="Pregnenolone biosynthesis"/>
</dbReference>
<dbReference type="Reactome" id="R-RNO-211976">
    <property type="pathway name" value="Endogenous sterols"/>
</dbReference>
<dbReference type="Reactome" id="R-RNO-2395516">
    <property type="pathway name" value="Electron transport from NADPH to Ferredoxin"/>
</dbReference>
<dbReference type="UniPathway" id="UPA00296"/>
<dbReference type="PRO" id="PR:P56522"/>
<dbReference type="Proteomes" id="UP000002494">
    <property type="component" value="Chromosome 10"/>
</dbReference>
<dbReference type="Bgee" id="ENSRNOG00000058497">
    <property type="expression patterns" value="Expressed in ovary and 19 other cell types or tissues"/>
</dbReference>
<dbReference type="GO" id="GO:0005743">
    <property type="term" value="C:mitochondrial inner membrane"/>
    <property type="evidence" value="ECO:0007669"/>
    <property type="project" value="UniProtKB-SubCell"/>
</dbReference>
<dbReference type="GO" id="GO:0005739">
    <property type="term" value="C:mitochondrion"/>
    <property type="evidence" value="ECO:0000314"/>
    <property type="project" value="UniProtKB"/>
</dbReference>
<dbReference type="GO" id="GO:0004324">
    <property type="term" value="F:ferredoxin-NADP+ reductase activity"/>
    <property type="evidence" value="ECO:0000250"/>
    <property type="project" value="UniProtKB"/>
</dbReference>
<dbReference type="GO" id="GO:0070402">
    <property type="term" value="F:NADPH binding"/>
    <property type="evidence" value="ECO:0000314"/>
    <property type="project" value="RGD"/>
</dbReference>
<dbReference type="GO" id="GO:0008203">
    <property type="term" value="P:cholesterol metabolic process"/>
    <property type="evidence" value="ECO:0007669"/>
    <property type="project" value="UniProtKB-UniPathway"/>
</dbReference>
<dbReference type="GO" id="GO:0006694">
    <property type="term" value="P:steroid biosynthetic process"/>
    <property type="evidence" value="ECO:0000318"/>
    <property type="project" value="GO_Central"/>
</dbReference>
<dbReference type="GO" id="GO:0006744">
    <property type="term" value="P:ubiquinone biosynthetic process"/>
    <property type="evidence" value="ECO:0000250"/>
    <property type="project" value="UniProtKB"/>
</dbReference>
<dbReference type="FunFam" id="3.50.50.60:FF:000036">
    <property type="entry name" value="NADPH:adrenodoxin oxidoreductase, mitochondrial"/>
    <property type="match status" value="1"/>
</dbReference>
<dbReference type="Gene3D" id="3.50.50.60">
    <property type="entry name" value="FAD/NAD(P)-binding domain"/>
    <property type="match status" value="1"/>
</dbReference>
<dbReference type="Gene3D" id="3.40.50.720">
    <property type="entry name" value="NAD(P)-binding Rossmann-like Domain"/>
    <property type="match status" value="1"/>
</dbReference>
<dbReference type="InterPro" id="IPR036188">
    <property type="entry name" value="FAD/NAD-bd_sf"/>
</dbReference>
<dbReference type="InterPro" id="IPR023753">
    <property type="entry name" value="FAD/NAD-binding_dom"/>
</dbReference>
<dbReference type="InterPro" id="IPR055275">
    <property type="entry name" value="Ferredox_Rdtase"/>
</dbReference>
<dbReference type="InterPro" id="IPR021163">
    <property type="entry name" value="Ferredox_Rdtase_adrenod"/>
</dbReference>
<dbReference type="PANTHER" id="PTHR48467">
    <property type="entry name" value="GLUTAMATE SYNTHASE 1 [NADH], CHLOROPLASTIC-LIKE"/>
    <property type="match status" value="1"/>
</dbReference>
<dbReference type="PANTHER" id="PTHR48467:SF1">
    <property type="entry name" value="GLUTAMATE SYNTHASE 1 [NADH], CHLOROPLASTIC-LIKE"/>
    <property type="match status" value="1"/>
</dbReference>
<dbReference type="Pfam" id="PF07992">
    <property type="entry name" value="Pyr_redox_2"/>
    <property type="match status" value="1"/>
</dbReference>
<dbReference type="PIRSF" id="PIRSF000362">
    <property type="entry name" value="FNR"/>
    <property type="match status" value="1"/>
</dbReference>
<dbReference type="PRINTS" id="PR00419">
    <property type="entry name" value="ADXRDTASE"/>
</dbReference>
<dbReference type="SUPFAM" id="SSF51905">
    <property type="entry name" value="FAD/NAD(P)-binding domain"/>
    <property type="match status" value="1"/>
</dbReference>
<dbReference type="SUPFAM" id="SSF51971">
    <property type="entry name" value="Nucleotide-binding domain"/>
    <property type="match status" value="2"/>
</dbReference>
<reference key="1">
    <citation type="journal article" date="1999" name="Biochim. Biophys. Acta">
        <title>cDNA cloning, overproduction and characterization of rat adrenodoxin reductase.</title>
        <authorList>
            <person name="Sagara Y."/>
            <person name="Watanabe Y."/>
            <person name="Kodama H."/>
            <person name="Aramaki H."/>
        </authorList>
    </citation>
    <scope>NUCLEOTIDE SEQUENCE [MRNA]</scope>
    <scope>PROTEIN SEQUENCE OF 35-54</scope>
    <scope>FUNCTION</scope>
    <scope>CATALYTIC ACTIVITY</scope>
    <scope>BIOPHYSICOCHEMICAL PROPERTIES</scope>
    <source>
        <strain>Wistar</strain>
        <tissue>Adrenal gland</tissue>
    </source>
</reference>
<reference key="2">
    <citation type="journal article" date="2004" name="Genome Res.">
        <title>The status, quality, and expansion of the NIH full-length cDNA project: the Mammalian Gene Collection (MGC).</title>
        <authorList>
            <consortium name="The MGC Project Team"/>
        </authorList>
    </citation>
    <scope>NUCLEOTIDE SEQUENCE [LARGE SCALE MRNA]</scope>
    <source>
        <tissue>Ovary</tissue>
    </source>
</reference>
<reference key="3">
    <citation type="journal article" date="1990" name="J. Cell Biol.">
        <title>Induction and mitochondrial localization of cytochrome P450scc system enzymes in normal and transformed ovarian granulosa cells.</title>
        <authorList>
            <person name="Hanukoglu I."/>
            <person name="Suh B.S."/>
            <person name="Himmelhoch S."/>
            <person name="Amsterdam A."/>
        </authorList>
    </citation>
    <scope>SUBCELLULAR LOCATION</scope>
</reference>
<reference key="4">
    <citation type="journal article" date="2006" name="Proc. Natl. Acad. Sci. U.S.A.">
        <title>Quantitative phosphoproteomics of vasopressin-sensitive renal cells: regulation of aquaporin-2 phosphorylation at two sites.</title>
        <authorList>
            <person name="Hoffert J.D."/>
            <person name="Pisitkun T."/>
            <person name="Wang G."/>
            <person name="Shen R.-F."/>
            <person name="Knepper M.A."/>
        </authorList>
    </citation>
    <scope>IDENTIFICATION BY MASS SPECTROMETRY [LARGE SCALE ANALYSIS]</scope>
</reference>
<gene>
    <name type="primary">Fdxr</name>
</gene>
<name>ADRO_RAT</name>
<evidence type="ECO:0000250" key="1">
    <source>
        <dbReference type="UniProtKB" id="P08165"/>
    </source>
</evidence>
<evidence type="ECO:0000250" key="2">
    <source>
        <dbReference type="UniProtKB" id="P22570"/>
    </source>
</evidence>
<evidence type="ECO:0000269" key="3">
    <source>
    </source>
</evidence>
<evidence type="ECO:0000269" key="4">
    <source>
    </source>
</evidence>
<evidence type="ECO:0000305" key="5"/>
<protein>
    <recommendedName>
        <fullName>NADPH:adrenodoxin oxidoreductase, mitochondrial</fullName>
        <shortName>AR</shortName>
        <shortName>Adrenodoxin reductase</shortName>
        <ecNumber evidence="3">1.18.1.6</ecNumber>
    </recommendedName>
    <alternativeName>
        <fullName>Ferredoxin--NADP(+) reductase</fullName>
        <shortName>Ferredoxin reductase</shortName>
    </alternativeName>
</protein>